<organism>
    <name type="scientific">Paracoccus denitrificans (strain Pd 1222)</name>
    <dbReference type="NCBI Taxonomy" id="318586"/>
    <lineage>
        <taxon>Bacteria</taxon>
        <taxon>Pseudomonadati</taxon>
        <taxon>Pseudomonadota</taxon>
        <taxon>Alphaproteobacteria</taxon>
        <taxon>Rhodobacterales</taxon>
        <taxon>Paracoccaceae</taxon>
        <taxon>Paracoccus</taxon>
    </lineage>
</organism>
<gene>
    <name evidence="1" type="primary">ureD</name>
    <name type="ordered locus">Pden_1212</name>
</gene>
<reference key="1">
    <citation type="submission" date="2006-12" db="EMBL/GenBank/DDBJ databases">
        <title>Complete sequence of chromosome 1 of Paracoccus denitrificans PD1222.</title>
        <authorList>
            <person name="Copeland A."/>
            <person name="Lucas S."/>
            <person name="Lapidus A."/>
            <person name="Barry K."/>
            <person name="Detter J.C."/>
            <person name="Glavina del Rio T."/>
            <person name="Hammon N."/>
            <person name="Israni S."/>
            <person name="Dalin E."/>
            <person name="Tice H."/>
            <person name="Pitluck S."/>
            <person name="Munk A.C."/>
            <person name="Brettin T."/>
            <person name="Bruce D."/>
            <person name="Han C."/>
            <person name="Tapia R."/>
            <person name="Gilna P."/>
            <person name="Schmutz J."/>
            <person name="Larimer F."/>
            <person name="Land M."/>
            <person name="Hauser L."/>
            <person name="Kyrpides N."/>
            <person name="Lykidis A."/>
            <person name="Spiro S."/>
            <person name="Richardson D.J."/>
            <person name="Moir J.W.B."/>
            <person name="Ferguson S.J."/>
            <person name="van Spanning R.J.M."/>
            <person name="Richardson P."/>
        </authorList>
    </citation>
    <scope>NUCLEOTIDE SEQUENCE [LARGE SCALE GENOMIC DNA]</scope>
    <source>
        <strain>Pd 1222</strain>
    </source>
</reference>
<comment type="function">
    <text evidence="1">Required for maturation of urease via the functional incorporation of the urease nickel metallocenter.</text>
</comment>
<comment type="subunit">
    <text evidence="1">UreD, UreF and UreG form a complex that acts as a GTP-hydrolysis-dependent molecular chaperone, activating the urease apoprotein by helping to assemble the nickel containing metallocenter of UreC. The UreE protein probably delivers the nickel.</text>
</comment>
<comment type="subcellular location">
    <subcellularLocation>
        <location evidence="1">Cytoplasm</location>
    </subcellularLocation>
</comment>
<comment type="similarity">
    <text evidence="1">Belongs to the UreD family.</text>
</comment>
<feature type="chain" id="PRO_0000340470" description="Urease accessory protein UreD">
    <location>
        <begin position="1"/>
        <end position="279"/>
    </location>
</feature>
<accession>A1B1C3</accession>
<proteinExistence type="inferred from homology"/>
<name>URED_PARDP</name>
<keyword id="KW-0143">Chaperone</keyword>
<keyword id="KW-0963">Cytoplasm</keyword>
<keyword id="KW-0996">Nickel insertion</keyword>
<keyword id="KW-1185">Reference proteome</keyword>
<sequence>MRGRRLSGPMFDAIAPIRMQRSRGAASVRLGPRGIEDLAQSGSAKAMLPRMTAGRPEIVFLNTAGGLASGDRLDYRIELAPRTQALATTQTAERAYRAKDAPAQIRLHLQVGEGGWLDWLPQETILYDGARLGRETAVDLAPGAGCLLLEPIILGRLAMGETIRHLQLTDRRIVRQDGRMIHHDALALDDAALSRLHHPAMLGKARAMASLALIAPHAADLLEPARAVLDEPGVTGAASAPPGRLILRLLADDGWPLRRQVIRLLRVLRPDPLPRIWQV</sequence>
<protein>
    <recommendedName>
        <fullName evidence="1">Urease accessory protein UreD</fullName>
    </recommendedName>
</protein>
<evidence type="ECO:0000255" key="1">
    <source>
        <dbReference type="HAMAP-Rule" id="MF_01384"/>
    </source>
</evidence>
<dbReference type="EMBL" id="CP000489">
    <property type="protein sequence ID" value="ABL69317.1"/>
    <property type="molecule type" value="Genomic_DNA"/>
</dbReference>
<dbReference type="RefSeq" id="WP_011747535.1">
    <property type="nucleotide sequence ID" value="NC_008686.1"/>
</dbReference>
<dbReference type="SMR" id="A1B1C3"/>
<dbReference type="STRING" id="318586.Pden_1212"/>
<dbReference type="EnsemblBacteria" id="ABL69317">
    <property type="protein sequence ID" value="ABL69317"/>
    <property type="gene ID" value="Pden_1212"/>
</dbReference>
<dbReference type="GeneID" id="93452428"/>
<dbReference type="KEGG" id="pde:Pden_1212"/>
<dbReference type="eggNOG" id="COG0829">
    <property type="taxonomic scope" value="Bacteria"/>
</dbReference>
<dbReference type="HOGENOM" id="CLU_056339_2_0_5"/>
<dbReference type="OrthoDB" id="9798842at2"/>
<dbReference type="Proteomes" id="UP000000361">
    <property type="component" value="Chromosome 1"/>
</dbReference>
<dbReference type="GO" id="GO:0005737">
    <property type="term" value="C:cytoplasm"/>
    <property type="evidence" value="ECO:0007669"/>
    <property type="project" value="UniProtKB-SubCell"/>
</dbReference>
<dbReference type="GO" id="GO:0016151">
    <property type="term" value="F:nickel cation binding"/>
    <property type="evidence" value="ECO:0007669"/>
    <property type="project" value="UniProtKB-UniRule"/>
</dbReference>
<dbReference type="HAMAP" id="MF_01384">
    <property type="entry name" value="UreD"/>
    <property type="match status" value="1"/>
</dbReference>
<dbReference type="InterPro" id="IPR002669">
    <property type="entry name" value="UreD"/>
</dbReference>
<dbReference type="PANTHER" id="PTHR33643">
    <property type="entry name" value="UREASE ACCESSORY PROTEIN D"/>
    <property type="match status" value="1"/>
</dbReference>
<dbReference type="PANTHER" id="PTHR33643:SF1">
    <property type="entry name" value="UREASE ACCESSORY PROTEIN D"/>
    <property type="match status" value="1"/>
</dbReference>
<dbReference type="Pfam" id="PF01774">
    <property type="entry name" value="UreD"/>
    <property type="match status" value="1"/>
</dbReference>